<sequence>MKKITLIGSELAKTGNEFIYLGHLNECESCRFKRICHNNLDVGARYKIVSVRSANHPCTVHENGVKVVEVAPAEFTILIESKKALEGVTLTHANVLCDKVCCKNYLSCHPEGISGKYKVSSIFSEKIDCQKGHSLKKVSIISLDESNK</sequence>
<protein>
    <recommendedName>
        <fullName evidence="1">UPF0179 protein Mevan_0979</fullName>
    </recommendedName>
</protein>
<feature type="chain" id="PRO_0000378123" description="UPF0179 protein Mevan_0979">
    <location>
        <begin position="1"/>
        <end position="148"/>
    </location>
</feature>
<evidence type="ECO:0000255" key="1">
    <source>
        <dbReference type="HAMAP-Rule" id="MF_00498"/>
    </source>
</evidence>
<dbReference type="EMBL" id="CP000742">
    <property type="protein sequence ID" value="ABR54882.1"/>
    <property type="molecule type" value="Genomic_DNA"/>
</dbReference>
<dbReference type="RefSeq" id="WP_012065811.1">
    <property type="nucleotide sequence ID" value="NC_009634.1"/>
</dbReference>
<dbReference type="STRING" id="406327.Mevan_0979"/>
<dbReference type="GeneID" id="5325831"/>
<dbReference type="KEGG" id="mvn:Mevan_0979"/>
<dbReference type="eggNOG" id="arCOG04477">
    <property type="taxonomic scope" value="Archaea"/>
</dbReference>
<dbReference type="HOGENOM" id="CLU_121764_0_0_2"/>
<dbReference type="OrthoDB" id="24613at2157"/>
<dbReference type="Proteomes" id="UP000001107">
    <property type="component" value="Chromosome"/>
</dbReference>
<dbReference type="HAMAP" id="MF_00498">
    <property type="entry name" value="UPF0179"/>
    <property type="match status" value="1"/>
</dbReference>
<dbReference type="InterPro" id="IPR005369">
    <property type="entry name" value="UPF0179"/>
</dbReference>
<dbReference type="PANTHER" id="PTHR40699">
    <property type="entry name" value="UPF0179 PROTEIN MJ1627"/>
    <property type="match status" value="1"/>
</dbReference>
<dbReference type="PANTHER" id="PTHR40699:SF1">
    <property type="entry name" value="UPF0179 PROTEIN MJ1627"/>
    <property type="match status" value="1"/>
</dbReference>
<dbReference type="Pfam" id="PF03684">
    <property type="entry name" value="UPF0179"/>
    <property type="match status" value="1"/>
</dbReference>
<dbReference type="PIRSF" id="PIRSF006595">
    <property type="entry name" value="UCP006595"/>
    <property type="match status" value="1"/>
</dbReference>
<gene>
    <name type="ordered locus">Mevan_0979</name>
</gene>
<reference key="1">
    <citation type="submission" date="2007-06" db="EMBL/GenBank/DDBJ databases">
        <title>Complete sequence of Methanococcus vannielii SB.</title>
        <authorList>
            <consortium name="US DOE Joint Genome Institute"/>
            <person name="Copeland A."/>
            <person name="Lucas S."/>
            <person name="Lapidus A."/>
            <person name="Barry K."/>
            <person name="Glavina del Rio T."/>
            <person name="Dalin E."/>
            <person name="Tice H."/>
            <person name="Pitluck S."/>
            <person name="Chain P."/>
            <person name="Malfatti S."/>
            <person name="Shin M."/>
            <person name="Vergez L."/>
            <person name="Schmutz J."/>
            <person name="Larimer F."/>
            <person name="Land M."/>
            <person name="Hauser L."/>
            <person name="Kyrpides N."/>
            <person name="Anderson I."/>
            <person name="Sieprawska-Lupa M."/>
            <person name="Whitman W.B."/>
            <person name="Richardson P."/>
        </authorList>
    </citation>
    <scope>NUCLEOTIDE SEQUENCE [LARGE SCALE GENOMIC DNA]</scope>
    <source>
        <strain>ATCC 35089 / DSM 1224 / JCM 13029 / OCM 148 / SB</strain>
    </source>
</reference>
<name>Y979_METVS</name>
<organism>
    <name type="scientific">Methanococcus vannielii (strain ATCC 35089 / DSM 1224 / JCM 13029 / OCM 148 / SB)</name>
    <dbReference type="NCBI Taxonomy" id="406327"/>
    <lineage>
        <taxon>Archaea</taxon>
        <taxon>Methanobacteriati</taxon>
        <taxon>Methanobacteriota</taxon>
        <taxon>Methanomada group</taxon>
        <taxon>Methanococci</taxon>
        <taxon>Methanococcales</taxon>
        <taxon>Methanococcaceae</taxon>
        <taxon>Methanococcus</taxon>
    </lineage>
</organism>
<comment type="similarity">
    <text evidence="1">Belongs to the UPF0179 family.</text>
</comment>
<accession>A6UQW0</accession>
<proteinExistence type="inferred from homology"/>